<reference key="1">
    <citation type="journal article" date="1994" name="Eur. J. Biochem.">
        <title>Identification of tissue-specific isoforms for subunits Vb and VIIa of cytochrome c oxidase isolated from rainbow trout.</title>
        <authorList>
            <person name="Freund R."/>
            <person name="Kadenbach B."/>
        </authorList>
    </citation>
    <scope>PROTEIN SEQUENCE</scope>
    <source>
        <tissue>Heart</tissue>
    </source>
</reference>
<proteinExistence type="evidence at protein level"/>
<name>CX7A2_ONCMY</name>
<comment type="function">
    <text evidence="1">Component of the cytochrome c oxidase, the last enzyme in the mitochondrial electron transport chain which drives oxidative phosphorylation. The respiratory chain contains 3 multisubunit complexes succinate dehydrogenase (complex II, CII), ubiquinol-cytochrome c oxidoreductase (cytochrome b-c1 complex, complex III, CIII) and cytochrome c oxidase (complex IV, CIV), that cooperate to transfer electrons derived from NADH and succinate to molecular oxygen, creating an electrochemical gradient over the inner membrane that drives transmembrane transport and the ATP synthase. Cytochrome c oxidase is the component of the respiratory chain that catalyzes the reduction of oxygen to water. Electrons originating from reduced cytochrome c in the intermembrane space (IMS) are transferred via the dinuclear copper A center (CU(A)) of subunit 2 and heme A of subunit 1 to the active site in subunit 1, a binuclear center (BNC) formed by heme A3 and copper B (CU(B)). The BNC reduces molecular oxygen to 2 water molecules using 4 electrons from cytochrome c in the IMS and 4 protons from the mitochondrial matrix.</text>
</comment>
<comment type="pathway">
    <text evidence="1">Energy metabolism; oxidative phosphorylation.</text>
</comment>
<comment type="subunit">
    <text evidence="2">Component of the cytochrome c oxidase (complex IV, CIV), a multisubunit enzyme composed of 14 subunits. The complex is composed of a catalytic core of 3 subunits MT-CO1, MT-CO2 and MT-CO3, encoded in the mitochondrial DNA, and 11 supernumerary subunits COX4I, COX5A, COX5B, COX6A, COX6B, COX6C, COX7A, COX7B, COX7C, COX8 and NDUFA4, which are encoded in the nuclear genome. The complex exists as a monomer or a dimer and forms supercomplexes (SCs) in the inner mitochondrial membrane with NADH-ubiquinone oxidoreductase (complex I, CI) and ubiquinol-cytochrome c oxidoreductase (cytochrome b-c1 complex, complex III, CIII), resulting in different assemblies (supercomplex SCI(1)III(2)IV(1) and megacomplex MCI(2)III(2)IV(2)). Interacts with PET100.</text>
</comment>
<comment type="subcellular location">
    <subcellularLocation>
        <location evidence="2">Mitochondrion inner membrane</location>
        <topology evidence="2">Single-pass membrane protein</topology>
    </subcellularLocation>
</comment>
<comment type="similarity">
    <text evidence="3">Belongs to the cytochrome c oxidase VIIa family.</text>
</comment>
<organism>
    <name type="scientific">Oncorhynchus mykiss</name>
    <name type="common">Rainbow trout</name>
    <name type="synonym">Salmo gairdneri</name>
    <dbReference type="NCBI Taxonomy" id="8022"/>
    <lineage>
        <taxon>Eukaryota</taxon>
        <taxon>Metazoa</taxon>
        <taxon>Chordata</taxon>
        <taxon>Craniata</taxon>
        <taxon>Vertebrata</taxon>
        <taxon>Euteleostomi</taxon>
        <taxon>Actinopterygii</taxon>
        <taxon>Neopterygii</taxon>
        <taxon>Teleostei</taxon>
        <taxon>Protacanthopterygii</taxon>
        <taxon>Salmoniformes</taxon>
        <taxon>Salmonidae</taxon>
        <taxon>Salmoninae</taxon>
        <taxon>Oncorhynchus</taxon>
    </lineage>
</organism>
<evidence type="ECO:0000250" key="1">
    <source>
        <dbReference type="UniProtKB" id="P10174"/>
    </source>
</evidence>
<evidence type="ECO:0000250" key="2">
    <source>
        <dbReference type="UniProtKB" id="P14406"/>
    </source>
</evidence>
<evidence type="ECO:0000305" key="3"/>
<feature type="chain" id="PRO_0000221003" description="Cytochrome c oxidase subunit 7A-heart, mitochondrial">
    <location>
        <begin position="1"/>
        <end position="10" status="greater than"/>
    </location>
</feature>
<feature type="non-terminal residue">
    <location>
        <position position="10"/>
    </location>
</feature>
<accession>P80332</accession>
<keyword id="KW-0903">Direct protein sequencing</keyword>
<keyword id="KW-0472">Membrane</keyword>
<keyword id="KW-0496">Mitochondrion</keyword>
<keyword id="KW-0999">Mitochondrion inner membrane</keyword>
<keyword id="KW-0560">Oxidoreductase</keyword>
<keyword id="KW-0812">Transmembrane</keyword>
<keyword id="KW-1133">Transmembrane helix</keyword>
<dbReference type="PIR" id="S43631">
    <property type="entry name" value="S43631"/>
</dbReference>
<dbReference type="UniPathway" id="UPA00705"/>
<dbReference type="Proteomes" id="UP000694395">
    <property type="component" value="Unplaced"/>
</dbReference>
<dbReference type="GO" id="GO:0005743">
    <property type="term" value="C:mitochondrial inner membrane"/>
    <property type="evidence" value="ECO:0007669"/>
    <property type="project" value="UniProtKB-SubCell"/>
</dbReference>
<dbReference type="GO" id="GO:0016491">
    <property type="term" value="F:oxidoreductase activity"/>
    <property type="evidence" value="ECO:0007669"/>
    <property type="project" value="UniProtKB-KW"/>
</dbReference>
<dbReference type="GO" id="GO:0006119">
    <property type="term" value="P:oxidative phosphorylation"/>
    <property type="evidence" value="ECO:0007669"/>
    <property type="project" value="UniProtKB-UniPathway"/>
</dbReference>
<sequence length="10" mass="1177">KNKVPXXQKL</sequence>
<protein>
    <recommendedName>
        <fullName>Cytochrome c oxidase subunit 7A-heart, mitochondrial</fullName>
    </recommendedName>
    <alternativeName>
        <fullName>Cytochrome c oxidase subunit VIIa-heart</fullName>
    </alternativeName>
</protein>